<proteinExistence type="inferred from homology"/>
<keyword id="KW-0067">ATP-binding</keyword>
<keyword id="KW-0997">Cell inner membrane</keyword>
<keyword id="KW-1003">Cell membrane</keyword>
<keyword id="KW-0472">Membrane</keyword>
<keyword id="KW-0547">Nucleotide-binding</keyword>
<keyword id="KW-1278">Translocase</keyword>
<keyword id="KW-0813">Transport</keyword>
<accession>Q1C1Y5</accession>
<protein>
    <recommendedName>
        <fullName evidence="1">Thiamine import ATP-binding protein ThiQ</fullName>
        <ecNumber evidence="1">7.6.2.15</ecNumber>
    </recommendedName>
</protein>
<comment type="function">
    <text evidence="1">Part of the ABC transporter complex ThiBPQ involved in thiamine import. Responsible for energy coupling to the transport system.</text>
</comment>
<comment type="catalytic activity">
    <reaction evidence="1">
        <text>thiamine(out) + ATP + H2O = thiamine(in) + ADP + phosphate + H(+)</text>
        <dbReference type="Rhea" id="RHEA:29811"/>
        <dbReference type="ChEBI" id="CHEBI:15377"/>
        <dbReference type="ChEBI" id="CHEBI:15378"/>
        <dbReference type="ChEBI" id="CHEBI:18385"/>
        <dbReference type="ChEBI" id="CHEBI:30616"/>
        <dbReference type="ChEBI" id="CHEBI:43474"/>
        <dbReference type="ChEBI" id="CHEBI:456216"/>
        <dbReference type="EC" id="7.6.2.15"/>
    </reaction>
</comment>
<comment type="subunit">
    <text evidence="1">The complex is composed of two ATP-binding proteins (ThiQ), two transmembrane proteins (ThiP) and a solute-binding protein (ThiB).</text>
</comment>
<comment type="subcellular location">
    <subcellularLocation>
        <location evidence="1">Cell inner membrane</location>
        <topology evidence="1">Peripheral membrane protein</topology>
    </subcellularLocation>
</comment>
<comment type="similarity">
    <text evidence="1">Belongs to the ABC transporter superfamily. Thiamine importer (TC 3.A.1.19.1) family.</text>
</comment>
<sequence>MLKLEKITYLYDHLPMCFDLRIQPGERVAILGPSGAGKSTLLSLIAGFLAPTGGHMLLNNQDHTASTPAQRPVSMLFQENNLFAHLTVEQNIGLGLHPGLKLSGEQRLLLQHIAQQVGLESCLDRLPAQLSGGQRQRAALARCLVRSQPILLLDEPFSALDPALRNEMLQLVDQVCINRQLTLLMVSHNLDDAARIAQRTLLIVEGRIDYDGPTQALVDGSAAKASVLGIKSAVIS</sequence>
<gene>
    <name evidence="1" type="primary">thiQ</name>
    <name type="ordered locus">YPA_3575</name>
</gene>
<reference key="1">
    <citation type="journal article" date="2006" name="J. Bacteriol.">
        <title>Complete genome sequence of Yersinia pestis strains Antiqua and Nepal516: evidence of gene reduction in an emerging pathogen.</title>
        <authorList>
            <person name="Chain P.S.G."/>
            <person name="Hu P."/>
            <person name="Malfatti S.A."/>
            <person name="Radnedge L."/>
            <person name="Larimer F."/>
            <person name="Vergez L.M."/>
            <person name="Worsham P."/>
            <person name="Chu M.C."/>
            <person name="Andersen G.L."/>
        </authorList>
    </citation>
    <scope>NUCLEOTIDE SEQUENCE [LARGE SCALE GENOMIC DNA]</scope>
    <source>
        <strain>Antiqua</strain>
    </source>
</reference>
<organism>
    <name type="scientific">Yersinia pestis bv. Antiqua (strain Antiqua)</name>
    <dbReference type="NCBI Taxonomy" id="360102"/>
    <lineage>
        <taxon>Bacteria</taxon>
        <taxon>Pseudomonadati</taxon>
        <taxon>Pseudomonadota</taxon>
        <taxon>Gammaproteobacteria</taxon>
        <taxon>Enterobacterales</taxon>
        <taxon>Yersiniaceae</taxon>
        <taxon>Yersinia</taxon>
    </lineage>
</organism>
<name>THIQ_YERPA</name>
<evidence type="ECO:0000255" key="1">
    <source>
        <dbReference type="HAMAP-Rule" id="MF_01723"/>
    </source>
</evidence>
<feature type="chain" id="PRO_0000274471" description="Thiamine import ATP-binding protein ThiQ">
    <location>
        <begin position="1"/>
        <end position="236"/>
    </location>
</feature>
<feature type="domain" description="ABC transporter" evidence="1">
    <location>
        <begin position="2"/>
        <end position="230"/>
    </location>
</feature>
<feature type="binding site" evidence="1">
    <location>
        <begin position="32"/>
        <end position="39"/>
    </location>
    <ligand>
        <name>ATP</name>
        <dbReference type="ChEBI" id="CHEBI:30616"/>
    </ligand>
</feature>
<dbReference type="EC" id="7.6.2.15" evidence="1"/>
<dbReference type="EMBL" id="CP000308">
    <property type="protein sequence ID" value="ABG15537.1"/>
    <property type="molecule type" value="Genomic_DNA"/>
</dbReference>
<dbReference type="RefSeq" id="WP_002210464.1">
    <property type="nucleotide sequence ID" value="NZ_CP009906.1"/>
</dbReference>
<dbReference type="SMR" id="Q1C1Y5"/>
<dbReference type="GeneID" id="57974090"/>
<dbReference type="KEGG" id="ypa:YPA_3575"/>
<dbReference type="Proteomes" id="UP000001971">
    <property type="component" value="Chromosome"/>
</dbReference>
<dbReference type="GO" id="GO:0005886">
    <property type="term" value="C:plasma membrane"/>
    <property type="evidence" value="ECO:0007669"/>
    <property type="project" value="UniProtKB-SubCell"/>
</dbReference>
<dbReference type="GO" id="GO:0048502">
    <property type="term" value="F:ABC-type thiamine transporter activity"/>
    <property type="evidence" value="ECO:0007669"/>
    <property type="project" value="UniProtKB-EC"/>
</dbReference>
<dbReference type="GO" id="GO:0005524">
    <property type="term" value="F:ATP binding"/>
    <property type="evidence" value="ECO:0007669"/>
    <property type="project" value="UniProtKB-KW"/>
</dbReference>
<dbReference type="GO" id="GO:0016887">
    <property type="term" value="F:ATP hydrolysis activity"/>
    <property type="evidence" value="ECO:0007669"/>
    <property type="project" value="InterPro"/>
</dbReference>
<dbReference type="FunFam" id="3.40.50.300:FF:001071">
    <property type="entry name" value="Thiamine import ATP-binding protein ThiQ"/>
    <property type="match status" value="1"/>
</dbReference>
<dbReference type="Gene3D" id="3.40.50.300">
    <property type="entry name" value="P-loop containing nucleotide triphosphate hydrolases"/>
    <property type="match status" value="1"/>
</dbReference>
<dbReference type="InterPro" id="IPR003593">
    <property type="entry name" value="AAA+_ATPase"/>
</dbReference>
<dbReference type="InterPro" id="IPR050093">
    <property type="entry name" value="ABC_SmlMolc_Importer"/>
</dbReference>
<dbReference type="InterPro" id="IPR003439">
    <property type="entry name" value="ABC_transporter-like_ATP-bd"/>
</dbReference>
<dbReference type="InterPro" id="IPR017871">
    <property type="entry name" value="ABC_transporter-like_CS"/>
</dbReference>
<dbReference type="InterPro" id="IPR027417">
    <property type="entry name" value="P-loop_NTPase"/>
</dbReference>
<dbReference type="InterPro" id="IPR005968">
    <property type="entry name" value="Thiamine_ABC_ThiQ"/>
</dbReference>
<dbReference type="NCBIfam" id="NF008039">
    <property type="entry name" value="PRK10771.1"/>
    <property type="match status" value="1"/>
</dbReference>
<dbReference type="NCBIfam" id="TIGR01277">
    <property type="entry name" value="thiQ"/>
    <property type="match status" value="1"/>
</dbReference>
<dbReference type="PANTHER" id="PTHR42781">
    <property type="entry name" value="SPERMIDINE/PUTRESCINE IMPORT ATP-BINDING PROTEIN POTA"/>
    <property type="match status" value="1"/>
</dbReference>
<dbReference type="PANTHER" id="PTHR42781:SF1">
    <property type="entry name" value="THIAMINE IMPORT ATP-BINDING PROTEIN THIQ"/>
    <property type="match status" value="1"/>
</dbReference>
<dbReference type="Pfam" id="PF00005">
    <property type="entry name" value="ABC_tran"/>
    <property type="match status" value="1"/>
</dbReference>
<dbReference type="SMART" id="SM00382">
    <property type="entry name" value="AAA"/>
    <property type="match status" value="1"/>
</dbReference>
<dbReference type="SUPFAM" id="SSF52540">
    <property type="entry name" value="P-loop containing nucleoside triphosphate hydrolases"/>
    <property type="match status" value="1"/>
</dbReference>
<dbReference type="PROSITE" id="PS00211">
    <property type="entry name" value="ABC_TRANSPORTER_1"/>
    <property type="match status" value="1"/>
</dbReference>
<dbReference type="PROSITE" id="PS50893">
    <property type="entry name" value="ABC_TRANSPORTER_2"/>
    <property type="match status" value="1"/>
</dbReference>
<dbReference type="PROSITE" id="PS51288">
    <property type="entry name" value="THIQ"/>
    <property type="match status" value="1"/>
</dbReference>